<organism>
    <name type="scientific">Shewanella sediminis (strain HAW-EB3)</name>
    <dbReference type="NCBI Taxonomy" id="425104"/>
    <lineage>
        <taxon>Bacteria</taxon>
        <taxon>Pseudomonadati</taxon>
        <taxon>Pseudomonadota</taxon>
        <taxon>Gammaproteobacteria</taxon>
        <taxon>Alteromonadales</taxon>
        <taxon>Shewanellaceae</taxon>
        <taxon>Shewanella</taxon>
    </lineage>
</organism>
<protein>
    <recommendedName>
        <fullName evidence="1">Phosphoenolpyruvate carboxykinase (ATP)</fullName>
        <shortName evidence="1">PCK</shortName>
        <shortName evidence="1">PEP carboxykinase</shortName>
        <shortName evidence="1">PEPCK</shortName>
        <ecNumber evidence="1">4.1.1.49</ecNumber>
    </recommendedName>
</protein>
<comment type="function">
    <text evidence="1">Involved in the gluconeogenesis. Catalyzes the conversion of oxaloacetate (OAA) to phosphoenolpyruvate (PEP) through direct phosphoryl transfer between the nucleoside triphosphate and OAA.</text>
</comment>
<comment type="catalytic activity">
    <reaction evidence="1">
        <text>oxaloacetate + ATP = phosphoenolpyruvate + ADP + CO2</text>
        <dbReference type="Rhea" id="RHEA:18617"/>
        <dbReference type="ChEBI" id="CHEBI:16452"/>
        <dbReference type="ChEBI" id="CHEBI:16526"/>
        <dbReference type="ChEBI" id="CHEBI:30616"/>
        <dbReference type="ChEBI" id="CHEBI:58702"/>
        <dbReference type="ChEBI" id="CHEBI:456216"/>
        <dbReference type="EC" id="4.1.1.49"/>
    </reaction>
</comment>
<comment type="cofactor">
    <cofactor evidence="1">
        <name>Mn(2+)</name>
        <dbReference type="ChEBI" id="CHEBI:29035"/>
    </cofactor>
    <text evidence="1">Binds 1 Mn(2+) ion per subunit.</text>
</comment>
<comment type="pathway">
    <text evidence="1">Carbohydrate biosynthesis; gluconeogenesis.</text>
</comment>
<comment type="subunit">
    <text evidence="1">Monomer.</text>
</comment>
<comment type="subcellular location">
    <subcellularLocation>
        <location evidence="1">Cytoplasm</location>
    </subcellularLocation>
</comment>
<comment type="similarity">
    <text evidence="1">Belongs to the phosphoenolpyruvate carboxykinase (ATP) family.</text>
</comment>
<sequence length="513" mass="56139">MADGTHSTHRNPSTAQLIELALSRGEGELTANGALVAKTGERTGRSPNDRFIVKEPGSEADIDWGTVNKPFEQTVFTALWNRVESYLGDKELFVSDLEVGADPEHYQPVRVTTETAWHQLFARNLFIVPEQFNAADKPIWQIMNAPGFECIPERDGTHSDATVIINFAERKVLLAGLKYAGEMKKSMFSVQNFLLPAKGVLPMHCSANVGIKGDTTLFFGLSGTGKTTLSADPKRFLIGDDEHGWAPGGVFNIEGGCYAKCIDLSQKNEPVIWNAIRFGTVLENVTMDENRVPDYTDSTLTENSRAAYPLEHIELRKEENLGAEPHAVVFLTCDVSGVLPPVSILTKEQAAYHFLSGYTAKVGSTEMGSSSAIQSTFSTCFGAPFFPRPAGVYAELLMKRIESFGSQVYLVNTGWTGGPHGIGKRFDIPTTRAIVDAIVNDDLKGVETEHLAKLNLNVPLAIPGVETKLLNPVNTWEDKAKYAEYAQQLAESFTENFAKYQVPDSIKNAGPNA</sequence>
<keyword id="KW-0067">ATP-binding</keyword>
<keyword id="KW-0963">Cytoplasm</keyword>
<keyword id="KW-0210">Decarboxylase</keyword>
<keyword id="KW-0312">Gluconeogenesis</keyword>
<keyword id="KW-0456">Lyase</keyword>
<keyword id="KW-0464">Manganese</keyword>
<keyword id="KW-0479">Metal-binding</keyword>
<keyword id="KW-0547">Nucleotide-binding</keyword>
<keyword id="KW-1185">Reference proteome</keyword>
<dbReference type="EC" id="4.1.1.49" evidence="1"/>
<dbReference type="EMBL" id="CP000821">
    <property type="protein sequence ID" value="ABV38964.1"/>
    <property type="molecule type" value="Genomic_DNA"/>
</dbReference>
<dbReference type="RefSeq" id="WP_012144691.1">
    <property type="nucleotide sequence ID" value="NC_009831.1"/>
</dbReference>
<dbReference type="SMR" id="A8G1J1"/>
<dbReference type="STRING" id="425104.Ssed_4362"/>
<dbReference type="KEGG" id="sse:Ssed_4362"/>
<dbReference type="eggNOG" id="COG1866">
    <property type="taxonomic scope" value="Bacteria"/>
</dbReference>
<dbReference type="HOGENOM" id="CLU_018247_0_1_6"/>
<dbReference type="OrthoDB" id="9806325at2"/>
<dbReference type="UniPathway" id="UPA00138"/>
<dbReference type="Proteomes" id="UP000002015">
    <property type="component" value="Chromosome"/>
</dbReference>
<dbReference type="GO" id="GO:0005829">
    <property type="term" value="C:cytosol"/>
    <property type="evidence" value="ECO:0007669"/>
    <property type="project" value="TreeGrafter"/>
</dbReference>
<dbReference type="GO" id="GO:0005524">
    <property type="term" value="F:ATP binding"/>
    <property type="evidence" value="ECO:0007669"/>
    <property type="project" value="UniProtKB-UniRule"/>
</dbReference>
<dbReference type="GO" id="GO:0046872">
    <property type="term" value="F:metal ion binding"/>
    <property type="evidence" value="ECO:0007669"/>
    <property type="project" value="UniProtKB-KW"/>
</dbReference>
<dbReference type="GO" id="GO:0004612">
    <property type="term" value="F:phosphoenolpyruvate carboxykinase (ATP) activity"/>
    <property type="evidence" value="ECO:0007669"/>
    <property type="project" value="UniProtKB-UniRule"/>
</dbReference>
<dbReference type="GO" id="GO:0006094">
    <property type="term" value="P:gluconeogenesis"/>
    <property type="evidence" value="ECO:0007669"/>
    <property type="project" value="UniProtKB-UniRule"/>
</dbReference>
<dbReference type="CDD" id="cd00484">
    <property type="entry name" value="PEPCK_ATP"/>
    <property type="match status" value="1"/>
</dbReference>
<dbReference type="FunFam" id="2.170.8.10:FF:000001">
    <property type="entry name" value="Phosphoenolpyruvate carboxykinase (ATP)"/>
    <property type="match status" value="1"/>
</dbReference>
<dbReference type="Gene3D" id="3.90.228.20">
    <property type="match status" value="1"/>
</dbReference>
<dbReference type="Gene3D" id="3.40.449.10">
    <property type="entry name" value="Phosphoenolpyruvate Carboxykinase, domain 1"/>
    <property type="match status" value="1"/>
</dbReference>
<dbReference type="Gene3D" id="2.170.8.10">
    <property type="entry name" value="Phosphoenolpyruvate Carboxykinase, domain 2"/>
    <property type="match status" value="1"/>
</dbReference>
<dbReference type="HAMAP" id="MF_00453">
    <property type="entry name" value="PEPCK_ATP"/>
    <property type="match status" value="1"/>
</dbReference>
<dbReference type="InterPro" id="IPR001272">
    <property type="entry name" value="PEP_carboxykinase_ATP"/>
</dbReference>
<dbReference type="InterPro" id="IPR013035">
    <property type="entry name" value="PEP_carboxykinase_C"/>
</dbReference>
<dbReference type="InterPro" id="IPR008210">
    <property type="entry name" value="PEP_carboxykinase_N"/>
</dbReference>
<dbReference type="InterPro" id="IPR015994">
    <property type="entry name" value="PEPCK_ATP_CS"/>
</dbReference>
<dbReference type="NCBIfam" id="TIGR00224">
    <property type="entry name" value="pckA"/>
    <property type="match status" value="1"/>
</dbReference>
<dbReference type="NCBIfam" id="NF006820">
    <property type="entry name" value="PRK09344.1-2"/>
    <property type="match status" value="1"/>
</dbReference>
<dbReference type="NCBIfam" id="NF006821">
    <property type="entry name" value="PRK09344.1-3"/>
    <property type="match status" value="1"/>
</dbReference>
<dbReference type="NCBIfam" id="NF006823">
    <property type="entry name" value="PRK09344.1-5"/>
    <property type="match status" value="1"/>
</dbReference>
<dbReference type="PANTHER" id="PTHR30031:SF0">
    <property type="entry name" value="PHOSPHOENOLPYRUVATE CARBOXYKINASE (ATP)"/>
    <property type="match status" value="1"/>
</dbReference>
<dbReference type="PANTHER" id="PTHR30031">
    <property type="entry name" value="PHOSPHOENOLPYRUVATE CARBOXYKINASE ATP"/>
    <property type="match status" value="1"/>
</dbReference>
<dbReference type="Pfam" id="PF01293">
    <property type="entry name" value="PEPCK_ATP"/>
    <property type="match status" value="1"/>
</dbReference>
<dbReference type="PIRSF" id="PIRSF006294">
    <property type="entry name" value="PEP_crbxkin"/>
    <property type="match status" value="1"/>
</dbReference>
<dbReference type="SUPFAM" id="SSF68923">
    <property type="entry name" value="PEP carboxykinase N-terminal domain"/>
    <property type="match status" value="1"/>
</dbReference>
<dbReference type="SUPFAM" id="SSF53795">
    <property type="entry name" value="PEP carboxykinase-like"/>
    <property type="match status" value="1"/>
</dbReference>
<dbReference type="PROSITE" id="PS00532">
    <property type="entry name" value="PEPCK_ATP"/>
    <property type="match status" value="1"/>
</dbReference>
<evidence type="ECO:0000255" key="1">
    <source>
        <dbReference type="HAMAP-Rule" id="MF_00453"/>
    </source>
</evidence>
<gene>
    <name evidence="1" type="primary">pckA</name>
    <name type="ordered locus">Ssed_4362</name>
</gene>
<accession>A8G1J1</accession>
<reference key="1">
    <citation type="submission" date="2007-08" db="EMBL/GenBank/DDBJ databases">
        <title>Complete sequence of Shewanella sediminis HAW-EB3.</title>
        <authorList>
            <consortium name="US DOE Joint Genome Institute"/>
            <person name="Copeland A."/>
            <person name="Lucas S."/>
            <person name="Lapidus A."/>
            <person name="Barry K."/>
            <person name="Glavina del Rio T."/>
            <person name="Dalin E."/>
            <person name="Tice H."/>
            <person name="Pitluck S."/>
            <person name="Chertkov O."/>
            <person name="Brettin T."/>
            <person name="Bruce D."/>
            <person name="Detter J.C."/>
            <person name="Han C."/>
            <person name="Schmutz J."/>
            <person name="Larimer F."/>
            <person name="Land M."/>
            <person name="Hauser L."/>
            <person name="Kyrpides N."/>
            <person name="Kim E."/>
            <person name="Zhao J.-S."/>
            <person name="Richardson P."/>
        </authorList>
    </citation>
    <scope>NUCLEOTIDE SEQUENCE [LARGE SCALE GENOMIC DNA]</scope>
    <source>
        <strain>HAW-EB3</strain>
    </source>
</reference>
<feature type="chain" id="PRO_1000081004" description="Phosphoenolpyruvate carboxykinase (ATP)">
    <location>
        <begin position="1"/>
        <end position="513"/>
    </location>
</feature>
<feature type="binding site" evidence="1">
    <location>
        <position position="45"/>
    </location>
    <ligand>
        <name>substrate</name>
    </ligand>
</feature>
<feature type="binding site" evidence="1">
    <location>
        <position position="179"/>
    </location>
    <ligand>
        <name>substrate</name>
    </ligand>
</feature>
<feature type="binding site" evidence="1">
    <location>
        <position position="185"/>
    </location>
    <ligand>
        <name>ATP</name>
        <dbReference type="ChEBI" id="CHEBI:30616"/>
    </ligand>
</feature>
<feature type="binding site" evidence="1">
    <location>
        <position position="185"/>
    </location>
    <ligand>
        <name>Mn(2+)</name>
        <dbReference type="ChEBI" id="CHEBI:29035"/>
    </ligand>
</feature>
<feature type="binding site" evidence="1">
    <location>
        <position position="185"/>
    </location>
    <ligand>
        <name>substrate</name>
    </ligand>
</feature>
<feature type="binding site" evidence="1">
    <location>
        <position position="204"/>
    </location>
    <ligand>
        <name>ATP</name>
        <dbReference type="ChEBI" id="CHEBI:30616"/>
    </ligand>
</feature>
<feature type="binding site" evidence="1">
    <location>
        <position position="204"/>
    </location>
    <ligand>
        <name>Mn(2+)</name>
        <dbReference type="ChEBI" id="CHEBI:29035"/>
    </ligand>
</feature>
<feature type="binding site" evidence="1">
    <location>
        <begin position="220"/>
        <end position="228"/>
    </location>
    <ligand>
        <name>ATP</name>
        <dbReference type="ChEBI" id="CHEBI:30616"/>
    </ligand>
</feature>
<feature type="binding site" evidence="1">
    <location>
        <position position="241"/>
    </location>
    <ligand>
        <name>Mn(2+)</name>
        <dbReference type="ChEBI" id="CHEBI:29035"/>
    </ligand>
</feature>
<feature type="binding site" evidence="1">
    <location>
        <position position="269"/>
    </location>
    <ligand>
        <name>ATP</name>
        <dbReference type="ChEBI" id="CHEBI:30616"/>
    </ligand>
</feature>
<feature type="binding site" evidence="1">
    <location>
        <position position="305"/>
    </location>
    <ligand>
        <name>ATP</name>
        <dbReference type="ChEBI" id="CHEBI:30616"/>
    </ligand>
</feature>
<feature type="binding site" evidence="1">
    <location>
        <position position="305"/>
    </location>
    <ligand>
        <name>substrate</name>
    </ligand>
</feature>
<feature type="binding site" evidence="1">
    <location>
        <position position="431"/>
    </location>
    <ligand>
        <name>ATP</name>
        <dbReference type="ChEBI" id="CHEBI:30616"/>
    </ligand>
</feature>
<name>PCKA_SHESH</name>
<proteinExistence type="inferred from homology"/>